<proteinExistence type="inferred from homology"/>
<accession>Q7V0U2</accession>
<protein>
    <recommendedName>
        <fullName evidence="1">Cobyric acid synthase</fullName>
    </recommendedName>
</protein>
<organism>
    <name type="scientific">Prochlorococcus marinus subsp. pastoris (strain CCMP1986 / NIES-2087 / MED4)</name>
    <dbReference type="NCBI Taxonomy" id="59919"/>
    <lineage>
        <taxon>Bacteria</taxon>
        <taxon>Bacillati</taxon>
        <taxon>Cyanobacteriota</taxon>
        <taxon>Cyanophyceae</taxon>
        <taxon>Synechococcales</taxon>
        <taxon>Prochlorococcaceae</taxon>
        <taxon>Prochlorococcus</taxon>
    </lineage>
</organism>
<dbReference type="EMBL" id="BX548174">
    <property type="protein sequence ID" value="CAE19619.1"/>
    <property type="molecule type" value="Genomic_DNA"/>
</dbReference>
<dbReference type="RefSeq" id="WP_011132794.1">
    <property type="nucleotide sequence ID" value="NC_005072.1"/>
</dbReference>
<dbReference type="SMR" id="Q7V0U2"/>
<dbReference type="STRING" id="59919.PMM1160"/>
<dbReference type="KEGG" id="pmm:PMM1160"/>
<dbReference type="eggNOG" id="COG1492">
    <property type="taxonomic scope" value="Bacteria"/>
</dbReference>
<dbReference type="HOGENOM" id="CLU_019250_2_2_3"/>
<dbReference type="OrthoDB" id="9808302at2"/>
<dbReference type="UniPathway" id="UPA00148"/>
<dbReference type="Proteomes" id="UP000001026">
    <property type="component" value="Chromosome"/>
</dbReference>
<dbReference type="GO" id="GO:0015420">
    <property type="term" value="F:ABC-type vitamin B12 transporter activity"/>
    <property type="evidence" value="ECO:0007669"/>
    <property type="project" value="UniProtKB-UniRule"/>
</dbReference>
<dbReference type="GO" id="GO:0003824">
    <property type="term" value="F:catalytic activity"/>
    <property type="evidence" value="ECO:0007669"/>
    <property type="project" value="InterPro"/>
</dbReference>
<dbReference type="GO" id="GO:0009236">
    <property type="term" value="P:cobalamin biosynthetic process"/>
    <property type="evidence" value="ECO:0007669"/>
    <property type="project" value="UniProtKB-UniRule"/>
</dbReference>
<dbReference type="CDD" id="cd01750">
    <property type="entry name" value="GATase1_CobQ"/>
    <property type="match status" value="1"/>
</dbReference>
<dbReference type="Gene3D" id="3.40.50.880">
    <property type="match status" value="1"/>
</dbReference>
<dbReference type="Gene3D" id="3.40.50.300">
    <property type="entry name" value="P-loop containing nucleotide triphosphate hydrolases"/>
    <property type="match status" value="1"/>
</dbReference>
<dbReference type="HAMAP" id="MF_00028">
    <property type="entry name" value="CobQ"/>
    <property type="match status" value="1"/>
</dbReference>
<dbReference type="InterPro" id="IPR029062">
    <property type="entry name" value="Class_I_gatase-like"/>
</dbReference>
<dbReference type="InterPro" id="IPR002586">
    <property type="entry name" value="CobQ/CobB/MinD/ParA_Nub-bd_dom"/>
</dbReference>
<dbReference type="InterPro" id="IPR033949">
    <property type="entry name" value="CobQ_GATase1"/>
</dbReference>
<dbReference type="InterPro" id="IPR004459">
    <property type="entry name" value="CobQ_synth"/>
</dbReference>
<dbReference type="InterPro" id="IPR011698">
    <property type="entry name" value="GATase_3"/>
</dbReference>
<dbReference type="InterPro" id="IPR027417">
    <property type="entry name" value="P-loop_NTPase"/>
</dbReference>
<dbReference type="NCBIfam" id="TIGR00313">
    <property type="entry name" value="cobQ"/>
    <property type="match status" value="1"/>
</dbReference>
<dbReference type="NCBIfam" id="NF001989">
    <property type="entry name" value="PRK00784.1"/>
    <property type="match status" value="1"/>
</dbReference>
<dbReference type="PANTHER" id="PTHR21343:SF1">
    <property type="entry name" value="COBYRIC ACID SYNTHASE"/>
    <property type="match status" value="1"/>
</dbReference>
<dbReference type="PANTHER" id="PTHR21343">
    <property type="entry name" value="DETHIOBIOTIN SYNTHETASE"/>
    <property type="match status" value="1"/>
</dbReference>
<dbReference type="Pfam" id="PF01656">
    <property type="entry name" value="CbiA"/>
    <property type="match status" value="1"/>
</dbReference>
<dbReference type="Pfam" id="PF07685">
    <property type="entry name" value="GATase_3"/>
    <property type="match status" value="1"/>
</dbReference>
<dbReference type="SUPFAM" id="SSF52317">
    <property type="entry name" value="Class I glutamine amidotransferase-like"/>
    <property type="match status" value="1"/>
</dbReference>
<dbReference type="SUPFAM" id="SSF52540">
    <property type="entry name" value="P-loop containing nucleoside triphosphate hydrolases"/>
    <property type="match status" value="1"/>
</dbReference>
<dbReference type="PROSITE" id="PS51274">
    <property type="entry name" value="GATASE_COBBQ"/>
    <property type="match status" value="1"/>
</dbReference>
<comment type="function">
    <text evidence="1">Catalyzes amidations at positions B, D, E, and G on adenosylcobyrinic A,C-diamide. NH(2) groups are provided by glutamine, and one molecule of ATP is hydrogenolyzed for each amidation.</text>
</comment>
<comment type="pathway">
    <text evidence="1">Cofactor biosynthesis; adenosylcobalamin biosynthesis.</text>
</comment>
<comment type="similarity">
    <text evidence="1">Belongs to the CobB/CobQ family. CobQ subfamily.</text>
</comment>
<name>COBQ_PROMP</name>
<reference key="1">
    <citation type="journal article" date="2003" name="Nature">
        <title>Genome divergence in two Prochlorococcus ecotypes reflects oceanic niche differentiation.</title>
        <authorList>
            <person name="Rocap G."/>
            <person name="Larimer F.W."/>
            <person name="Lamerdin J.E."/>
            <person name="Malfatti S."/>
            <person name="Chain P."/>
            <person name="Ahlgren N.A."/>
            <person name="Arellano A."/>
            <person name="Coleman M."/>
            <person name="Hauser L."/>
            <person name="Hess W.R."/>
            <person name="Johnson Z.I."/>
            <person name="Land M.L."/>
            <person name="Lindell D."/>
            <person name="Post A.F."/>
            <person name="Regala W."/>
            <person name="Shah M."/>
            <person name="Shaw S.L."/>
            <person name="Steglich C."/>
            <person name="Sullivan M.B."/>
            <person name="Ting C.S."/>
            <person name="Tolonen A."/>
            <person name="Webb E.A."/>
            <person name="Zinser E.R."/>
            <person name="Chisholm S.W."/>
        </authorList>
    </citation>
    <scope>NUCLEOTIDE SEQUENCE [LARGE SCALE GENOMIC DNA]</scope>
    <source>
        <strain>CCMP1986 / NIES-2087 / MED4</strain>
    </source>
</reference>
<keyword id="KW-0169">Cobalamin biosynthesis</keyword>
<keyword id="KW-0315">Glutamine amidotransferase</keyword>
<gene>
    <name evidence="1" type="primary">cobQ</name>
    <name type="ordered locus">PMM1160</name>
</gene>
<feature type="chain" id="PRO_0000141319" description="Cobyric acid synthase">
    <location>
        <begin position="1"/>
        <end position="509"/>
    </location>
</feature>
<feature type="domain" description="GATase cobBQ-type" evidence="1">
    <location>
        <begin position="262"/>
        <end position="459"/>
    </location>
</feature>
<feature type="active site" description="Nucleophile" evidence="1">
    <location>
        <position position="343"/>
    </location>
</feature>
<feature type="active site" evidence="1">
    <location>
        <position position="451"/>
    </location>
</feature>
<evidence type="ECO:0000255" key="1">
    <source>
        <dbReference type="HAMAP-Rule" id="MF_00028"/>
    </source>
</evidence>
<sequence length="509" mass="57570">MELIEKLQPIKKPLMVLGTSSGAGKSLTVTAIGRILKNSGEEPIPFKGQNMSNNAWVDWNGGEMAFSQALQAFACGIIPSSEMNPILLKPQGNSTSEVIHLGKSKGITTAKDYYKDWFFPGWGVIKKSLNSIYERYPNCRLIIEGAGSPVEMNLIHRDLTNLRVAKYLNANCILVTDIERGGVFAQIIGTLELMKPDERKLIKGILINRFRGDLSLFEEGKKWIENKTKIPVLGIIPWLDDKFPPEDSLDLLEKKSSLTNPELKVGIIKLPSISNFSDFDPLENEESILIKWVMESQNLNQYDFLIIPGSKQTIKDQKFLRDSGLSEDIKNYSTNKGNIFGICGGLQMLGTILEDPFFKEGSKINCEKSINGIGLLPLKTTFFQKKITRQINSESIWPQVTEINGFEIHNGVTELDNSQDTFKIKPIFKDLDLGWYKENIQGGTIAGTYIHGIFENDDWRDHYLNLIRKGKNLPLLKKRTRSYKMKRENIIDNLANEFKKNFNISSLLN</sequence>